<sequence length="444" mass="46170">MGKLFGTDGVRGVANQGLPPELAFRLGRAGAAVLAGKGDRVRVVVGRDTRISGDMLEAALVAGICSVGGQVLKVGIIPTPAVAWLTRDLGADAGVVISASHNPVADNGIKFFSASGYKLPDPVEEEIERLVLAPEDNLPRPVGVDLGRVKEVTEAPERYIAHVCSTAGRGLAGMQVVLDCANGAACRVAPAIFQRLGAEVSLLHNVPDGTNINVRCGSTHPESLQAEVVARGAAVGLAFDGDADRVIAVDEKGQVVDGDVIMTILALYRQEQGGLPGGQVVVTVMSNYGLHQALTAAGLRVQQTRVGDRYVLEEMLKSGAVLGGEQSGHIILLEHNTTGDGLITGVQLLQVMAATGRPLSELAAAMPRLPQILVNVRVGDKDAAMASPALQAAVAAAREQLAGRGRVLVRPSGTEPIIRLMVEGPDREELENIMAGLQRVASGL</sequence>
<name>GLMM_MOOTA</name>
<accession>Q2RGA6</accession>
<reference key="1">
    <citation type="journal article" date="2008" name="Environ. Microbiol.">
        <title>The complete genome sequence of Moorella thermoacetica (f. Clostridium thermoaceticum).</title>
        <authorList>
            <person name="Pierce E."/>
            <person name="Xie G."/>
            <person name="Barabote R.D."/>
            <person name="Saunders E."/>
            <person name="Han C.S."/>
            <person name="Detter J.C."/>
            <person name="Richardson P."/>
            <person name="Brettin T.S."/>
            <person name="Das A."/>
            <person name="Ljungdahl L.G."/>
            <person name="Ragsdale S.W."/>
        </authorList>
    </citation>
    <scope>NUCLEOTIDE SEQUENCE [LARGE SCALE GENOMIC DNA]</scope>
    <source>
        <strain>ATCC 39073 / JCM 9320</strain>
    </source>
</reference>
<comment type="function">
    <text evidence="1">Catalyzes the conversion of glucosamine-6-phosphate to glucosamine-1-phosphate.</text>
</comment>
<comment type="catalytic activity">
    <reaction evidence="1">
        <text>alpha-D-glucosamine 1-phosphate = D-glucosamine 6-phosphate</text>
        <dbReference type="Rhea" id="RHEA:23424"/>
        <dbReference type="ChEBI" id="CHEBI:58516"/>
        <dbReference type="ChEBI" id="CHEBI:58725"/>
        <dbReference type="EC" id="5.4.2.10"/>
    </reaction>
</comment>
<comment type="cofactor">
    <cofactor evidence="1">
        <name>Mg(2+)</name>
        <dbReference type="ChEBI" id="CHEBI:18420"/>
    </cofactor>
    <text evidence="1">Binds 1 Mg(2+) ion per subunit.</text>
</comment>
<comment type="PTM">
    <text evidence="1">Activated by phosphorylation.</text>
</comment>
<comment type="similarity">
    <text evidence="1">Belongs to the phosphohexose mutase family.</text>
</comment>
<protein>
    <recommendedName>
        <fullName evidence="1">Phosphoglucosamine mutase</fullName>
        <ecNumber evidence="1">5.4.2.10</ecNumber>
    </recommendedName>
</protein>
<dbReference type="EC" id="5.4.2.10" evidence="1"/>
<dbReference type="EMBL" id="CP000232">
    <property type="protein sequence ID" value="ABC20533.1"/>
    <property type="molecule type" value="Genomic_DNA"/>
</dbReference>
<dbReference type="RefSeq" id="YP_431076.1">
    <property type="nucleotide sequence ID" value="NC_007644.1"/>
</dbReference>
<dbReference type="SMR" id="Q2RGA6"/>
<dbReference type="STRING" id="264732.Moth_2246"/>
<dbReference type="EnsemblBacteria" id="ABC20533">
    <property type="protein sequence ID" value="ABC20533"/>
    <property type="gene ID" value="Moth_2246"/>
</dbReference>
<dbReference type="KEGG" id="mta:Moth_2246"/>
<dbReference type="PATRIC" id="fig|264732.11.peg.2445"/>
<dbReference type="eggNOG" id="COG1109">
    <property type="taxonomic scope" value="Bacteria"/>
</dbReference>
<dbReference type="HOGENOM" id="CLU_016950_7_0_9"/>
<dbReference type="OrthoDB" id="9806956at2"/>
<dbReference type="GO" id="GO:0005829">
    <property type="term" value="C:cytosol"/>
    <property type="evidence" value="ECO:0007669"/>
    <property type="project" value="TreeGrafter"/>
</dbReference>
<dbReference type="GO" id="GO:0000287">
    <property type="term" value="F:magnesium ion binding"/>
    <property type="evidence" value="ECO:0007669"/>
    <property type="project" value="UniProtKB-UniRule"/>
</dbReference>
<dbReference type="GO" id="GO:0008966">
    <property type="term" value="F:phosphoglucosamine mutase activity"/>
    <property type="evidence" value="ECO:0007669"/>
    <property type="project" value="UniProtKB-UniRule"/>
</dbReference>
<dbReference type="GO" id="GO:0004615">
    <property type="term" value="F:phosphomannomutase activity"/>
    <property type="evidence" value="ECO:0007669"/>
    <property type="project" value="TreeGrafter"/>
</dbReference>
<dbReference type="GO" id="GO:0005975">
    <property type="term" value="P:carbohydrate metabolic process"/>
    <property type="evidence" value="ECO:0007669"/>
    <property type="project" value="InterPro"/>
</dbReference>
<dbReference type="GO" id="GO:0009252">
    <property type="term" value="P:peptidoglycan biosynthetic process"/>
    <property type="evidence" value="ECO:0007669"/>
    <property type="project" value="TreeGrafter"/>
</dbReference>
<dbReference type="GO" id="GO:0006048">
    <property type="term" value="P:UDP-N-acetylglucosamine biosynthetic process"/>
    <property type="evidence" value="ECO:0007669"/>
    <property type="project" value="TreeGrafter"/>
</dbReference>
<dbReference type="CDD" id="cd05802">
    <property type="entry name" value="GlmM"/>
    <property type="match status" value="1"/>
</dbReference>
<dbReference type="FunFam" id="3.30.310.50:FF:000001">
    <property type="entry name" value="Phosphoglucosamine mutase"/>
    <property type="match status" value="1"/>
</dbReference>
<dbReference type="FunFam" id="3.40.120.10:FF:000001">
    <property type="entry name" value="Phosphoglucosamine mutase"/>
    <property type="match status" value="1"/>
</dbReference>
<dbReference type="FunFam" id="3.40.120.10:FF:000002">
    <property type="entry name" value="Phosphoglucosamine mutase"/>
    <property type="match status" value="1"/>
</dbReference>
<dbReference type="Gene3D" id="3.40.120.10">
    <property type="entry name" value="Alpha-D-Glucose-1,6-Bisphosphate, subunit A, domain 3"/>
    <property type="match status" value="3"/>
</dbReference>
<dbReference type="Gene3D" id="3.30.310.50">
    <property type="entry name" value="Alpha-D-phosphohexomutase, C-terminal domain"/>
    <property type="match status" value="1"/>
</dbReference>
<dbReference type="HAMAP" id="MF_01554_B">
    <property type="entry name" value="GlmM_B"/>
    <property type="match status" value="1"/>
</dbReference>
<dbReference type="InterPro" id="IPR005844">
    <property type="entry name" value="A-D-PHexomutase_a/b/a-I"/>
</dbReference>
<dbReference type="InterPro" id="IPR016055">
    <property type="entry name" value="A-D-PHexomutase_a/b/a-I/II/III"/>
</dbReference>
<dbReference type="InterPro" id="IPR005845">
    <property type="entry name" value="A-D-PHexomutase_a/b/a-II"/>
</dbReference>
<dbReference type="InterPro" id="IPR005846">
    <property type="entry name" value="A-D-PHexomutase_a/b/a-III"/>
</dbReference>
<dbReference type="InterPro" id="IPR005843">
    <property type="entry name" value="A-D-PHexomutase_C"/>
</dbReference>
<dbReference type="InterPro" id="IPR036900">
    <property type="entry name" value="A-D-PHexomutase_C_sf"/>
</dbReference>
<dbReference type="InterPro" id="IPR016066">
    <property type="entry name" value="A-D-PHexomutase_CS"/>
</dbReference>
<dbReference type="InterPro" id="IPR005841">
    <property type="entry name" value="Alpha-D-phosphohexomutase_SF"/>
</dbReference>
<dbReference type="InterPro" id="IPR006352">
    <property type="entry name" value="GlmM_bact"/>
</dbReference>
<dbReference type="InterPro" id="IPR050060">
    <property type="entry name" value="Phosphoglucosamine_mutase"/>
</dbReference>
<dbReference type="NCBIfam" id="TIGR01455">
    <property type="entry name" value="glmM"/>
    <property type="match status" value="1"/>
</dbReference>
<dbReference type="NCBIfam" id="NF008139">
    <property type="entry name" value="PRK10887.1"/>
    <property type="match status" value="1"/>
</dbReference>
<dbReference type="PANTHER" id="PTHR42946:SF1">
    <property type="entry name" value="PHOSPHOGLUCOMUTASE (ALPHA-D-GLUCOSE-1,6-BISPHOSPHATE-DEPENDENT)"/>
    <property type="match status" value="1"/>
</dbReference>
<dbReference type="PANTHER" id="PTHR42946">
    <property type="entry name" value="PHOSPHOHEXOSE MUTASE"/>
    <property type="match status" value="1"/>
</dbReference>
<dbReference type="Pfam" id="PF02878">
    <property type="entry name" value="PGM_PMM_I"/>
    <property type="match status" value="1"/>
</dbReference>
<dbReference type="Pfam" id="PF02879">
    <property type="entry name" value="PGM_PMM_II"/>
    <property type="match status" value="1"/>
</dbReference>
<dbReference type="Pfam" id="PF02880">
    <property type="entry name" value="PGM_PMM_III"/>
    <property type="match status" value="1"/>
</dbReference>
<dbReference type="Pfam" id="PF00408">
    <property type="entry name" value="PGM_PMM_IV"/>
    <property type="match status" value="1"/>
</dbReference>
<dbReference type="PRINTS" id="PR00509">
    <property type="entry name" value="PGMPMM"/>
</dbReference>
<dbReference type="SUPFAM" id="SSF55957">
    <property type="entry name" value="Phosphoglucomutase, C-terminal domain"/>
    <property type="match status" value="1"/>
</dbReference>
<dbReference type="SUPFAM" id="SSF53738">
    <property type="entry name" value="Phosphoglucomutase, first 3 domains"/>
    <property type="match status" value="3"/>
</dbReference>
<dbReference type="PROSITE" id="PS00710">
    <property type="entry name" value="PGM_PMM"/>
    <property type="match status" value="1"/>
</dbReference>
<gene>
    <name evidence="1" type="primary">glmM</name>
    <name type="ordered locus">Moth_2246</name>
</gene>
<organism>
    <name type="scientific">Moorella thermoacetica (strain ATCC 39073 / JCM 9320)</name>
    <dbReference type="NCBI Taxonomy" id="264732"/>
    <lineage>
        <taxon>Bacteria</taxon>
        <taxon>Bacillati</taxon>
        <taxon>Bacillota</taxon>
        <taxon>Clostridia</taxon>
        <taxon>Moorellales</taxon>
        <taxon>Moorellaceae</taxon>
        <taxon>Moorella</taxon>
    </lineage>
</organism>
<keyword id="KW-0413">Isomerase</keyword>
<keyword id="KW-0460">Magnesium</keyword>
<keyword id="KW-0479">Metal-binding</keyword>
<keyword id="KW-0597">Phosphoprotein</keyword>
<proteinExistence type="inferred from homology"/>
<evidence type="ECO:0000255" key="1">
    <source>
        <dbReference type="HAMAP-Rule" id="MF_01554"/>
    </source>
</evidence>
<feature type="chain" id="PRO_0000301339" description="Phosphoglucosamine mutase">
    <location>
        <begin position="1"/>
        <end position="444"/>
    </location>
</feature>
<feature type="active site" description="Phosphoserine intermediate" evidence="1">
    <location>
        <position position="100"/>
    </location>
</feature>
<feature type="binding site" description="via phosphate group" evidence="1">
    <location>
        <position position="100"/>
    </location>
    <ligand>
        <name>Mg(2+)</name>
        <dbReference type="ChEBI" id="CHEBI:18420"/>
    </ligand>
</feature>
<feature type="binding site" evidence="1">
    <location>
        <position position="240"/>
    </location>
    <ligand>
        <name>Mg(2+)</name>
        <dbReference type="ChEBI" id="CHEBI:18420"/>
    </ligand>
</feature>
<feature type="binding site" evidence="1">
    <location>
        <position position="242"/>
    </location>
    <ligand>
        <name>Mg(2+)</name>
        <dbReference type="ChEBI" id="CHEBI:18420"/>
    </ligand>
</feature>
<feature type="binding site" evidence="1">
    <location>
        <position position="244"/>
    </location>
    <ligand>
        <name>Mg(2+)</name>
        <dbReference type="ChEBI" id="CHEBI:18420"/>
    </ligand>
</feature>
<feature type="modified residue" description="Phosphoserine" evidence="1">
    <location>
        <position position="100"/>
    </location>
</feature>